<dbReference type="EC" id="1.5.3.-" evidence="1"/>
<dbReference type="EMBL" id="CU928162">
    <property type="protein sequence ID" value="CAR07404.1"/>
    <property type="molecule type" value="Genomic_DNA"/>
</dbReference>
<dbReference type="RefSeq" id="WP_000872795.1">
    <property type="nucleotide sequence ID" value="NC_011745.1"/>
</dbReference>
<dbReference type="SMR" id="B7MTJ0"/>
<dbReference type="KEGG" id="ecq:ECED1_1203"/>
<dbReference type="HOGENOM" id="CLU_007884_2_1_6"/>
<dbReference type="Proteomes" id="UP000000748">
    <property type="component" value="Chromosome"/>
</dbReference>
<dbReference type="GO" id="GO:0005829">
    <property type="term" value="C:cytosol"/>
    <property type="evidence" value="ECO:0007669"/>
    <property type="project" value="TreeGrafter"/>
</dbReference>
<dbReference type="GO" id="GO:0050660">
    <property type="term" value="F:flavin adenine dinucleotide binding"/>
    <property type="evidence" value="ECO:0007669"/>
    <property type="project" value="InterPro"/>
</dbReference>
<dbReference type="GO" id="GO:0050131">
    <property type="term" value="F:N-methyl-L-amino-acid oxidase activity"/>
    <property type="evidence" value="ECO:0007669"/>
    <property type="project" value="InterPro"/>
</dbReference>
<dbReference type="GO" id="GO:0008115">
    <property type="term" value="F:sarcosine oxidase activity"/>
    <property type="evidence" value="ECO:0007669"/>
    <property type="project" value="TreeGrafter"/>
</dbReference>
<dbReference type="Gene3D" id="3.30.9.10">
    <property type="entry name" value="D-Amino Acid Oxidase, subunit A, domain 2"/>
    <property type="match status" value="1"/>
</dbReference>
<dbReference type="Gene3D" id="3.50.50.60">
    <property type="entry name" value="FAD/NAD(P)-binding domain"/>
    <property type="match status" value="1"/>
</dbReference>
<dbReference type="HAMAP" id="MF_00515">
    <property type="entry name" value="MTOX"/>
    <property type="match status" value="1"/>
</dbReference>
<dbReference type="InterPro" id="IPR006076">
    <property type="entry name" value="FAD-dep_OxRdtase"/>
</dbReference>
<dbReference type="InterPro" id="IPR036188">
    <property type="entry name" value="FAD/NAD-bd_sf"/>
</dbReference>
<dbReference type="InterPro" id="IPR023493">
    <property type="entry name" value="Me_Trp_Oxase_MTOX"/>
</dbReference>
<dbReference type="InterPro" id="IPR045170">
    <property type="entry name" value="MTOX"/>
</dbReference>
<dbReference type="NCBIfam" id="NF008425">
    <property type="entry name" value="PRK11259.1"/>
    <property type="match status" value="1"/>
</dbReference>
<dbReference type="PANTHER" id="PTHR10961:SF7">
    <property type="entry name" value="FAD DEPENDENT OXIDOREDUCTASE DOMAIN-CONTAINING PROTEIN"/>
    <property type="match status" value="1"/>
</dbReference>
<dbReference type="PANTHER" id="PTHR10961">
    <property type="entry name" value="PEROXISOMAL SARCOSINE OXIDASE"/>
    <property type="match status" value="1"/>
</dbReference>
<dbReference type="Pfam" id="PF01266">
    <property type="entry name" value="DAO"/>
    <property type="match status" value="1"/>
</dbReference>
<dbReference type="SUPFAM" id="SSF54373">
    <property type="entry name" value="FAD-linked reductases, C-terminal domain"/>
    <property type="match status" value="1"/>
</dbReference>
<dbReference type="SUPFAM" id="SSF51905">
    <property type="entry name" value="FAD/NAD(P)-binding domain"/>
    <property type="match status" value="1"/>
</dbReference>
<evidence type="ECO:0000255" key="1">
    <source>
        <dbReference type="HAMAP-Rule" id="MF_00515"/>
    </source>
</evidence>
<keyword id="KW-0274">FAD</keyword>
<keyword id="KW-0285">Flavoprotein</keyword>
<keyword id="KW-0560">Oxidoreductase</keyword>
<accession>B7MTJ0</accession>
<name>MTOX_ECO81</name>
<gene>
    <name evidence="1" type="primary">solA</name>
    <name type="ordered locus">ECED1_1203</name>
</gene>
<feature type="chain" id="PRO_1000146174" description="N-methyl-L-tryptophan oxidase">
    <location>
        <begin position="1"/>
        <end position="372"/>
    </location>
</feature>
<feature type="binding site" evidence="1">
    <location>
        <begin position="4"/>
        <end position="34"/>
    </location>
    <ligand>
        <name>FAD</name>
        <dbReference type="ChEBI" id="CHEBI:57692"/>
    </ligand>
</feature>
<feature type="modified residue" description="S-8alpha-FAD cysteine" evidence="1">
    <location>
        <position position="308"/>
    </location>
</feature>
<reference key="1">
    <citation type="journal article" date="2009" name="PLoS Genet.">
        <title>Organised genome dynamics in the Escherichia coli species results in highly diverse adaptive paths.</title>
        <authorList>
            <person name="Touchon M."/>
            <person name="Hoede C."/>
            <person name="Tenaillon O."/>
            <person name="Barbe V."/>
            <person name="Baeriswyl S."/>
            <person name="Bidet P."/>
            <person name="Bingen E."/>
            <person name="Bonacorsi S."/>
            <person name="Bouchier C."/>
            <person name="Bouvet O."/>
            <person name="Calteau A."/>
            <person name="Chiapello H."/>
            <person name="Clermont O."/>
            <person name="Cruveiller S."/>
            <person name="Danchin A."/>
            <person name="Diard M."/>
            <person name="Dossat C."/>
            <person name="Karoui M.E."/>
            <person name="Frapy E."/>
            <person name="Garry L."/>
            <person name="Ghigo J.M."/>
            <person name="Gilles A.M."/>
            <person name="Johnson J."/>
            <person name="Le Bouguenec C."/>
            <person name="Lescat M."/>
            <person name="Mangenot S."/>
            <person name="Martinez-Jehanne V."/>
            <person name="Matic I."/>
            <person name="Nassif X."/>
            <person name="Oztas S."/>
            <person name="Petit M.A."/>
            <person name="Pichon C."/>
            <person name="Rouy Z."/>
            <person name="Ruf C.S."/>
            <person name="Schneider D."/>
            <person name="Tourret J."/>
            <person name="Vacherie B."/>
            <person name="Vallenet D."/>
            <person name="Medigue C."/>
            <person name="Rocha E.P.C."/>
            <person name="Denamur E."/>
        </authorList>
    </citation>
    <scope>NUCLEOTIDE SEQUENCE [LARGE SCALE GENOMIC DNA]</scope>
    <source>
        <strain>ED1a</strain>
    </source>
</reference>
<organism>
    <name type="scientific">Escherichia coli O81 (strain ED1a)</name>
    <dbReference type="NCBI Taxonomy" id="585397"/>
    <lineage>
        <taxon>Bacteria</taxon>
        <taxon>Pseudomonadati</taxon>
        <taxon>Pseudomonadota</taxon>
        <taxon>Gammaproteobacteria</taxon>
        <taxon>Enterobacterales</taxon>
        <taxon>Enterobacteriaceae</taxon>
        <taxon>Escherichia</taxon>
    </lineage>
</organism>
<proteinExistence type="inferred from homology"/>
<sequence length="372" mass="40886">MKYDLIIIGSGSVGAAAGYYATRAGLNVLMTDAHMPPHQHGSHHGDTRLIRHAYGEGEKYVPLVLRAQMLWDELSRHNEDDPIFVRSGVINLGPADSAFLANVAHSAEQWQLNVEKLDAQGIMARWPEIRVPDNYIGLFETDSGFLRSELAIKTWIQLAKEAGCAQLFNCPVTAIRHDDDGVTIETADGVYQAKKAIVCAGTWVKDLLPELPVQPVRKVFAWYQADGRYSVKNKFPAFTGELPNGDQYYGFPAENDALKIGKHNGGQVIHSADERVPFAEVVSDGSEAFPFLRNVLPGIGCCLYGAACTYDNSPDEDFIIDTLPGHDNTLLITGLSGHGFKFASVLGEIAADFAQDKKSDFDLTPFRLSRFQ</sequence>
<protein>
    <recommendedName>
        <fullName evidence="1">N-methyl-L-tryptophan oxidase</fullName>
        <shortName evidence="1">MTOX</shortName>
        <ecNumber evidence="1">1.5.3.-</ecNumber>
    </recommendedName>
</protein>
<comment type="function">
    <text evidence="1">Catalyzes the oxidative demethylation of N-methyl-L-tryptophan.</text>
</comment>
<comment type="catalytic activity">
    <reaction evidence="1">
        <text>N(alpha)-methyl-L-tryptophan + O2 + H2O = L-tryptophan + formaldehyde + H2O2</text>
        <dbReference type="Rhea" id="RHEA:28006"/>
        <dbReference type="ChEBI" id="CHEBI:15377"/>
        <dbReference type="ChEBI" id="CHEBI:15379"/>
        <dbReference type="ChEBI" id="CHEBI:16240"/>
        <dbReference type="ChEBI" id="CHEBI:16842"/>
        <dbReference type="ChEBI" id="CHEBI:57283"/>
        <dbReference type="ChEBI" id="CHEBI:57912"/>
    </reaction>
</comment>
<comment type="cofactor">
    <cofactor evidence="1">
        <name>FAD</name>
        <dbReference type="ChEBI" id="CHEBI:57692"/>
    </cofactor>
    <text evidence="1">Binds 1 FAD per subunit.</text>
</comment>
<comment type="subunit">
    <text evidence="1">Monomer.</text>
</comment>
<comment type="similarity">
    <text evidence="1">Belongs to the MSOX/MTOX family. MTOX subfamily.</text>
</comment>